<dbReference type="EC" id="3.5.4.5" evidence="1"/>
<dbReference type="EMBL" id="CP001144">
    <property type="protein sequence ID" value="ACH73895.1"/>
    <property type="molecule type" value="Genomic_DNA"/>
</dbReference>
<dbReference type="RefSeq" id="WP_000553532.1">
    <property type="nucleotide sequence ID" value="NC_011205.1"/>
</dbReference>
<dbReference type="SMR" id="B5FMZ9"/>
<dbReference type="KEGG" id="sed:SeD_A2530"/>
<dbReference type="HOGENOM" id="CLU_052424_0_0_6"/>
<dbReference type="Proteomes" id="UP000008322">
    <property type="component" value="Chromosome"/>
</dbReference>
<dbReference type="GO" id="GO:0005829">
    <property type="term" value="C:cytosol"/>
    <property type="evidence" value="ECO:0007669"/>
    <property type="project" value="TreeGrafter"/>
</dbReference>
<dbReference type="GO" id="GO:0004126">
    <property type="term" value="F:cytidine deaminase activity"/>
    <property type="evidence" value="ECO:0007669"/>
    <property type="project" value="UniProtKB-UniRule"/>
</dbReference>
<dbReference type="GO" id="GO:0042802">
    <property type="term" value="F:identical protein binding"/>
    <property type="evidence" value="ECO:0007669"/>
    <property type="project" value="UniProtKB-ARBA"/>
</dbReference>
<dbReference type="GO" id="GO:0008270">
    <property type="term" value="F:zinc ion binding"/>
    <property type="evidence" value="ECO:0007669"/>
    <property type="project" value="UniProtKB-UniRule"/>
</dbReference>
<dbReference type="GO" id="GO:0009972">
    <property type="term" value="P:cytidine deamination"/>
    <property type="evidence" value="ECO:0007669"/>
    <property type="project" value="InterPro"/>
</dbReference>
<dbReference type="CDD" id="cd01283">
    <property type="entry name" value="cytidine_deaminase"/>
    <property type="match status" value="2"/>
</dbReference>
<dbReference type="FunFam" id="3.40.140.10:FF:000006">
    <property type="entry name" value="Cytidine deaminase"/>
    <property type="match status" value="1"/>
</dbReference>
<dbReference type="FunFam" id="3.40.140.10:FF:000007">
    <property type="entry name" value="Cytidine deaminase"/>
    <property type="match status" value="1"/>
</dbReference>
<dbReference type="Gene3D" id="3.40.140.10">
    <property type="entry name" value="Cytidine Deaminase, domain 2"/>
    <property type="match status" value="2"/>
</dbReference>
<dbReference type="HAMAP" id="MF_01558">
    <property type="entry name" value="Cyt_deam"/>
    <property type="match status" value="1"/>
</dbReference>
<dbReference type="InterPro" id="IPR016192">
    <property type="entry name" value="APOBEC/CMP_deaminase_Zn-bd"/>
</dbReference>
<dbReference type="InterPro" id="IPR002125">
    <property type="entry name" value="CMP_dCMP_dom"/>
</dbReference>
<dbReference type="InterPro" id="IPR013171">
    <property type="entry name" value="Cyd/dCyd_deaminase_Zn-bd"/>
</dbReference>
<dbReference type="InterPro" id="IPR050202">
    <property type="entry name" value="Cyt/Deoxycyt_deaminase"/>
</dbReference>
<dbReference type="InterPro" id="IPR006263">
    <property type="entry name" value="Cyt_deam_dimer"/>
</dbReference>
<dbReference type="InterPro" id="IPR016193">
    <property type="entry name" value="Cytidine_deaminase-like"/>
</dbReference>
<dbReference type="InterPro" id="IPR020797">
    <property type="entry name" value="Cytidine_deaminase_bacteria"/>
</dbReference>
<dbReference type="NCBIfam" id="TIGR01355">
    <property type="entry name" value="cyt_deam_dimer"/>
    <property type="match status" value="1"/>
</dbReference>
<dbReference type="NCBIfam" id="NF006537">
    <property type="entry name" value="PRK09027.1"/>
    <property type="match status" value="1"/>
</dbReference>
<dbReference type="PANTHER" id="PTHR11644">
    <property type="entry name" value="CYTIDINE DEAMINASE"/>
    <property type="match status" value="1"/>
</dbReference>
<dbReference type="PANTHER" id="PTHR11644:SF2">
    <property type="entry name" value="CYTIDINE DEAMINASE"/>
    <property type="match status" value="1"/>
</dbReference>
<dbReference type="Pfam" id="PF00383">
    <property type="entry name" value="dCMP_cyt_deam_1"/>
    <property type="match status" value="1"/>
</dbReference>
<dbReference type="Pfam" id="PF08211">
    <property type="entry name" value="dCMP_cyt_deam_2"/>
    <property type="match status" value="1"/>
</dbReference>
<dbReference type="PIRSF" id="PIRSF006334">
    <property type="entry name" value="Cdd_plus_pseudo"/>
    <property type="match status" value="1"/>
</dbReference>
<dbReference type="SUPFAM" id="SSF53927">
    <property type="entry name" value="Cytidine deaminase-like"/>
    <property type="match status" value="2"/>
</dbReference>
<dbReference type="PROSITE" id="PS00903">
    <property type="entry name" value="CYT_DCMP_DEAMINASES_1"/>
    <property type="match status" value="1"/>
</dbReference>
<dbReference type="PROSITE" id="PS51747">
    <property type="entry name" value="CYT_DCMP_DEAMINASES_2"/>
    <property type="match status" value="2"/>
</dbReference>
<evidence type="ECO:0000255" key="1">
    <source>
        <dbReference type="HAMAP-Rule" id="MF_01558"/>
    </source>
</evidence>
<evidence type="ECO:0000255" key="2">
    <source>
        <dbReference type="PROSITE-ProRule" id="PRU01083"/>
    </source>
</evidence>
<proteinExistence type="inferred from homology"/>
<protein>
    <recommendedName>
        <fullName evidence="1">Cytidine deaminase</fullName>
        <ecNumber evidence="1">3.5.4.5</ecNumber>
    </recommendedName>
    <alternativeName>
        <fullName evidence="1">Cytidine aminohydrolase</fullName>
        <shortName evidence="1">CDA</shortName>
    </alternativeName>
</protein>
<sequence>MHPRFQTAFAQLADNLQSALAPILADHHFPAMLTAEQVSTLKNTAGLDEDALAFALLPLAATCARTDLSHFNVGAIARGVSGNWYFGANMEFLGATMQQTVHAEQSAISHAWLRGEKGLAAVTVNYTPCGHCRQFMNELNSGLDLRIHLPGRAPHTLRDYLPDAFGPKDLEIKTLLMDEQDHGFTLTGDTLTQAAITAANKSHMPYSHSPSGVALECKDGRIFTGSYAENAAFNPTLPPLQGALNLLSLNGYDYADIQRAILAEKGDAALIQWDATAATLKALGCHNIDRVLLG</sequence>
<accession>B5FMZ9</accession>
<keyword id="KW-0378">Hydrolase</keyword>
<keyword id="KW-0479">Metal-binding</keyword>
<keyword id="KW-0862">Zinc</keyword>
<feature type="chain" id="PRO_1000147108" description="Cytidine deaminase">
    <location>
        <begin position="1"/>
        <end position="294"/>
    </location>
</feature>
<feature type="domain" description="CMP/dCMP-type deaminase 1" evidence="2">
    <location>
        <begin position="48"/>
        <end position="168"/>
    </location>
</feature>
<feature type="domain" description="CMP/dCMP-type deaminase 2" evidence="2">
    <location>
        <begin position="186"/>
        <end position="294"/>
    </location>
</feature>
<feature type="active site" description="Proton donor" evidence="1">
    <location>
        <position position="104"/>
    </location>
</feature>
<feature type="binding site" evidence="1">
    <location>
        <begin position="89"/>
        <end position="91"/>
    </location>
    <ligand>
        <name>substrate</name>
    </ligand>
</feature>
<feature type="binding site" evidence="1">
    <location>
        <position position="102"/>
    </location>
    <ligand>
        <name>Zn(2+)</name>
        <dbReference type="ChEBI" id="CHEBI:29105"/>
        <note>catalytic</note>
    </ligand>
</feature>
<feature type="binding site" evidence="1">
    <location>
        <position position="129"/>
    </location>
    <ligand>
        <name>Zn(2+)</name>
        <dbReference type="ChEBI" id="CHEBI:29105"/>
        <note>catalytic</note>
    </ligand>
</feature>
<feature type="binding site" evidence="1">
    <location>
        <position position="132"/>
    </location>
    <ligand>
        <name>Zn(2+)</name>
        <dbReference type="ChEBI" id="CHEBI:29105"/>
        <note>catalytic</note>
    </ligand>
</feature>
<reference key="1">
    <citation type="journal article" date="2011" name="J. Bacteriol.">
        <title>Comparative genomics of 28 Salmonella enterica isolates: evidence for CRISPR-mediated adaptive sublineage evolution.</title>
        <authorList>
            <person name="Fricke W.F."/>
            <person name="Mammel M.K."/>
            <person name="McDermott P.F."/>
            <person name="Tartera C."/>
            <person name="White D.G."/>
            <person name="Leclerc J.E."/>
            <person name="Ravel J."/>
            <person name="Cebula T.A."/>
        </authorList>
    </citation>
    <scope>NUCLEOTIDE SEQUENCE [LARGE SCALE GENOMIC DNA]</scope>
    <source>
        <strain>CT_02021853</strain>
    </source>
</reference>
<comment type="function">
    <text evidence="1">This enzyme scavenges exogenous and endogenous cytidine and 2'-deoxycytidine for UMP synthesis.</text>
</comment>
<comment type="catalytic activity">
    <reaction evidence="1">
        <text>cytidine + H2O + H(+) = uridine + NH4(+)</text>
        <dbReference type="Rhea" id="RHEA:16069"/>
        <dbReference type="ChEBI" id="CHEBI:15377"/>
        <dbReference type="ChEBI" id="CHEBI:15378"/>
        <dbReference type="ChEBI" id="CHEBI:16704"/>
        <dbReference type="ChEBI" id="CHEBI:17562"/>
        <dbReference type="ChEBI" id="CHEBI:28938"/>
        <dbReference type="EC" id="3.5.4.5"/>
    </reaction>
</comment>
<comment type="catalytic activity">
    <reaction evidence="1">
        <text>2'-deoxycytidine + H2O + H(+) = 2'-deoxyuridine + NH4(+)</text>
        <dbReference type="Rhea" id="RHEA:13433"/>
        <dbReference type="ChEBI" id="CHEBI:15377"/>
        <dbReference type="ChEBI" id="CHEBI:15378"/>
        <dbReference type="ChEBI" id="CHEBI:15698"/>
        <dbReference type="ChEBI" id="CHEBI:16450"/>
        <dbReference type="ChEBI" id="CHEBI:28938"/>
        <dbReference type="EC" id="3.5.4.5"/>
    </reaction>
</comment>
<comment type="cofactor">
    <cofactor evidence="1">
        <name>Zn(2+)</name>
        <dbReference type="ChEBI" id="CHEBI:29105"/>
    </cofactor>
    <text evidence="1">Binds 1 zinc ion.</text>
</comment>
<comment type="subunit">
    <text evidence="1">Homodimer.</text>
</comment>
<comment type="similarity">
    <text evidence="1">Belongs to the cytidine and deoxycytidylate deaminase family.</text>
</comment>
<organism>
    <name type="scientific">Salmonella dublin (strain CT_02021853)</name>
    <dbReference type="NCBI Taxonomy" id="439851"/>
    <lineage>
        <taxon>Bacteria</taxon>
        <taxon>Pseudomonadati</taxon>
        <taxon>Pseudomonadota</taxon>
        <taxon>Gammaproteobacteria</taxon>
        <taxon>Enterobacterales</taxon>
        <taxon>Enterobacteriaceae</taxon>
        <taxon>Salmonella</taxon>
    </lineage>
</organism>
<name>CDD_SALDC</name>
<gene>
    <name evidence="1" type="primary">cdd</name>
    <name type="ordered locus">SeD_A2530</name>
</gene>